<comment type="function">
    <text evidence="1">F(1)F(0) ATP synthase produces ATP from ADP in the presence of a proton or sodium gradient. F-type ATPases consist of two structural domains, F(1) containing the extramembraneous catalytic core and F(0) containing the membrane proton channel, linked together by a central stalk and a peripheral stalk. During catalysis, ATP synthesis in the catalytic domain of F(1) is coupled via a rotary mechanism of the central stalk subunits to proton translocation.</text>
</comment>
<comment type="function">
    <text evidence="1">This protein is part of the stalk that links CF(0) to CF(1). It either transmits conformational changes from CF(0) to CF(1) or is implicated in proton conduction.</text>
</comment>
<comment type="subunit">
    <text evidence="1">F-type ATPases have 2 components, F(1) - the catalytic core - and F(0) - the membrane proton channel. F(1) has five subunits: alpha(3), beta(3), gamma(1), delta(1), epsilon(1). F(0) has three main subunits: a(1), b(2) and c(10-14). The alpha and beta chains form an alternating ring which encloses part of the gamma chain. F(1) is attached to F(0) by a central stalk formed by the gamma and epsilon chains, while a peripheral stalk is formed by the delta and b chains.</text>
</comment>
<comment type="subcellular location">
    <subcellularLocation>
        <location evidence="1">Cell inner membrane</location>
        <topology evidence="1">Peripheral membrane protein</topology>
    </subcellularLocation>
</comment>
<comment type="similarity">
    <text evidence="1">Belongs to the ATPase delta chain family.</text>
</comment>
<dbReference type="EMBL" id="CP001052">
    <property type="protein sequence ID" value="ACD18284.1"/>
    <property type="molecule type" value="Genomic_DNA"/>
</dbReference>
<dbReference type="RefSeq" id="WP_012434804.1">
    <property type="nucleotide sequence ID" value="NC_010681.1"/>
</dbReference>
<dbReference type="SMR" id="B2T7K3"/>
<dbReference type="STRING" id="398527.Bphyt_3897"/>
<dbReference type="KEGG" id="bpy:Bphyt_3897"/>
<dbReference type="eggNOG" id="COG0712">
    <property type="taxonomic scope" value="Bacteria"/>
</dbReference>
<dbReference type="HOGENOM" id="CLU_085114_3_0_4"/>
<dbReference type="OrthoDB" id="9816221at2"/>
<dbReference type="Proteomes" id="UP000001739">
    <property type="component" value="Chromosome 1"/>
</dbReference>
<dbReference type="GO" id="GO:0005886">
    <property type="term" value="C:plasma membrane"/>
    <property type="evidence" value="ECO:0007669"/>
    <property type="project" value="UniProtKB-SubCell"/>
</dbReference>
<dbReference type="GO" id="GO:0045259">
    <property type="term" value="C:proton-transporting ATP synthase complex"/>
    <property type="evidence" value="ECO:0007669"/>
    <property type="project" value="UniProtKB-KW"/>
</dbReference>
<dbReference type="GO" id="GO:0046933">
    <property type="term" value="F:proton-transporting ATP synthase activity, rotational mechanism"/>
    <property type="evidence" value="ECO:0007669"/>
    <property type="project" value="UniProtKB-UniRule"/>
</dbReference>
<dbReference type="Gene3D" id="1.10.520.20">
    <property type="entry name" value="N-terminal domain of the delta subunit of the F1F0-ATP synthase"/>
    <property type="match status" value="1"/>
</dbReference>
<dbReference type="HAMAP" id="MF_01416">
    <property type="entry name" value="ATP_synth_delta_bact"/>
    <property type="match status" value="1"/>
</dbReference>
<dbReference type="InterPro" id="IPR026015">
    <property type="entry name" value="ATP_synth_OSCP/delta_N_sf"/>
</dbReference>
<dbReference type="InterPro" id="IPR000711">
    <property type="entry name" value="ATPase_OSCP/dsu"/>
</dbReference>
<dbReference type="NCBIfam" id="TIGR01145">
    <property type="entry name" value="ATP_synt_delta"/>
    <property type="match status" value="1"/>
</dbReference>
<dbReference type="NCBIfam" id="NF004402">
    <property type="entry name" value="PRK05758.2-2"/>
    <property type="match status" value="1"/>
</dbReference>
<dbReference type="PANTHER" id="PTHR11910">
    <property type="entry name" value="ATP SYNTHASE DELTA CHAIN"/>
    <property type="match status" value="1"/>
</dbReference>
<dbReference type="Pfam" id="PF00213">
    <property type="entry name" value="OSCP"/>
    <property type="match status" value="1"/>
</dbReference>
<dbReference type="PRINTS" id="PR00125">
    <property type="entry name" value="ATPASEDELTA"/>
</dbReference>
<dbReference type="SUPFAM" id="SSF47928">
    <property type="entry name" value="N-terminal domain of the delta subunit of the F1F0-ATP synthase"/>
    <property type="match status" value="1"/>
</dbReference>
<feature type="chain" id="PRO_0000370924" description="ATP synthase subunit delta">
    <location>
        <begin position="1"/>
        <end position="179"/>
    </location>
</feature>
<organism>
    <name type="scientific">Paraburkholderia phytofirmans (strain DSM 17436 / LMG 22146 / PsJN)</name>
    <name type="common">Burkholderia phytofirmans</name>
    <dbReference type="NCBI Taxonomy" id="398527"/>
    <lineage>
        <taxon>Bacteria</taxon>
        <taxon>Pseudomonadati</taxon>
        <taxon>Pseudomonadota</taxon>
        <taxon>Betaproteobacteria</taxon>
        <taxon>Burkholderiales</taxon>
        <taxon>Burkholderiaceae</taxon>
        <taxon>Paraburkholderia</taxon>
    </lineage>
</organism>
<gene>
    <name evidence="1" type="primary">atpH</name>
    <name type="ordered locus">Bphyt_3897</name>
</gene>
<sequence>MAELATIARPYAEALFGVAEAGDIAAWSTLVQELAQVARLPEVLSIASSPKVSRAQVSELLLAAVKSPLKDNAQAKNLVQMLVDNHRLQLLPEIAVQFEELKNAREGAADVLIVSAFPLEGAQLNDLVASLERKFKRKLKPTVEIDPSLIGGVRVTVGDEVLDTSVRARLASMQTALTA</sequence>
<evidence type="ECO:0000255" key="1">
    <source>
        <dbReference type="HAMAP-Rule" id="MF_01416"/>
    </source>
</evidence>
<proteinExistence type="inferred from homology"/>
<keyword id="KW-0066">ATP synthesis</keyword>
<keyword id="KW-0997">Cell inner membrane</keyword>
<keyword id="KW-1003">Cell membrane</keyword>
<keyword id="KW-0139">CF(1)</keyword>
<keyword id="KW-0375">Hydrogen ion transport</keyword>
<keyword id="KW-0406">Ion transport</keyword>
<keyword id="KW-0472">Membrane</keyword>
<keyword id="KW-0813">Transport</keyword>
<accession>B2T7K3</accession>
<protein>
    <recommendedName>
        <fullName evidence="1">ATP synthase subunit delta</fullName>
    </recommendedName>
    <alternativeName>
        <fullName evidence="1">ATP synthase F(1) sector subunit delta</fullName>
    </alternativeName>
    <alternativeName>
        <fullName evidence="1">F-type ATPase subunit delta</fullName>
        <shortName evidence="1">F-ATPase subunit delta</shortName>
    </alternativeName>
</protein>
<reference key="1">
    <citation type="journal article" date="2011" name="J. Bacteriol.">
        <title>Complete genome sequence of the plant growth-promoting endophyte Burkholderia phytofirmans strain PsJN.</title>
        <authorList>
            <person name="Weilharter A."/>
            <person name="Mitter B."/>
            <person name="Shin M.V."/>
            <person name="Chain P.S."/>
            <person name="Nowak J."/>
            <person name="Sessitsch A."/>
        </authorList>
    </citation>
    <scope>NUCLEOTIDE SEQUENCE [LARGE SCALE GENOMIC DNA]</scope>
    <source>
        <strain>DSM 17436 / LMG 22146 / PsJN</strain>
    </source>
</reference>
<name>ATPD_PARPJ</name>